<feature type="chain" id="PRO_0000052366" description="Sodium/hydrogen exchanger 8">
    <location>
        <begin position="1"/>
        <end position="576"/>
    </location>
</feature>
<feature type="transmembrane region" description="Helical" evidence="3">
    <location>
        <begin position="55"/>
        <end position="75"/>
    </location>
</feature>
<feature type="transmembrane region" description="Helical" evidence="3">
    <location>
        <begin position="79"/>
        <end position="99"/>
    </location>
</feature>
<feature type="transmembrane region" description="Helical" evidence="3">
    <location>
        <begin position="118"/>
        <end position="138"/>
    </location>
</feature>
<feature type="transmembrane region" description="Helical" evidence="3">
    <location>
        <begin position="151"/>
        <end position="171"/>
    </location>
</feature>
<feature type="transmembrane region" description="Helical" evidence="3">
    <location>
        <begin position="186"/>
        <end position="206"/>
    </location>
</feature>
<feature type="transmembrane region" description="Helical" evidence="3">
    <location>
        <begin position="256"/>
        <end position="276"/>
    </location>
</feature>
<feature type="transmembrane region" description="Helical" evidence="3">
    <location>
        <begin position="306"/>
        <end position="326"/>
    </location>
</feature>
<feature type="transmembrane region" description="Helical" evidence="3">
    <location>
        <begin position="349"/>
        <end position="369"/>
    </location>
</feature>
<feature type="transmembrane region" description="Helical" evidence="3">
    <location>
        <begin position="374"/>
        <end position="394"/>
    </location>
</feature>
<feature type="transmembrane region" description="Helical" evidence="3">
    <location>
        <begin position="412"/>
        <end position="432"/>
    </location>
</feature>
<feature type="transmembrane region" description="Helical" evidence="3">
    <location>
        <begin position="446"/>
        <end position="466"/>
    </location>
</feature>
<feature type="modified residue" description="Phosphothreonine" evidence="17">
    <location>
        <position position="505"/>
    </location>
</feature>
<feature type="modified residue" description="Phosphoserine" evidence="2">
    <location>
        <position position="566"/>
    </location>
</feature>
<feature type="modified residue" description="Phosphoserine" evidence="2">
    <location>
        <position position="568"/>
    </location>
</feature>
<feature type="splice variant" id="VSP_009503" description="In isoform 3." evidence="14">
    <location>
        <begin position="1"/>
        <end position="289"/>
    </location>
</feature>
<feature type="splice variant" id="VSP_009500" description="In isoform 2." evidence="15">
    <location>
        <begin position="65"/>
        <end position="91"/>
    </location>
</feature>
<feature type="splice variant" id="VSP_009504" description="In isoform 3." evidence="14">
    <original>PSLEFGMMIIFAYLPYGLAEGISLSG</original>
    <variation>MWTLCSTCWCLEKAFSTMQSPSSSPS</variation>
    <location>
        <begin position="290"/>
        <end position="315"/>
    </location>
</feature>
<feature type="sequence conflict" description="In Ref. 3; BAE25331." evidence="16" ref="3">
    <original>S</original>
    <variation>R</variation>
    <location>
        <position position="247"/>
    </location>
</feature>
<feature type="sequence conflict" description="In Ref. 3; BAC34770." evidence="16" ref="3">
    <location>
        <begin position="280"/>
        <end position="283"/>
    </location>
</feature>
<feature type="sequence conflict" description="In Ref. 3; BAE25331." evidence="16" ref="3">
    <original>D</original>
    <variation>E</variation>
    <location>
        <position position="542"/>
    </location>
</feature>
<protein>
    <recommendedName>
        <fullName>Sodium/hydrogen exchanger 8</fullName>
    </recommendedName>
    <alternativeName>
        <fullName>Na(+)/H(+) exchanger 8</fullName>
        <shortName>NHE-8</shortName>
    </alternativeName>
    <alternativeName>
        <fullName>Solute carrier family 9 member 8</fullName>
    </alternativeName>
</protein>
<proteinExistence type="evidence at protein level"/>
<gene>
    <name type="primary">Slc9a8</name>
    <name type="synonym">Nhe8</name>
</gene>
<evidence type="ECO:0000250" key="1">
    <source>
        <dbReference type="UniProtKB" id="Q4L208"/>
    </source>
</evidence>
<evidence type="ECO:0000250" key="2">
    <source>
        <dbReference type="UniProtKB" id="Q9Y2E8"/>
    </source>
</evidence>
<evidence type="ECO:0000255" key="3"/>
<evidence type="ECO:0000269" key="4">
    <source>
    </source>
</evidence>
<evidence type="ECO:0000269" key="5">
    <source>
    </source>
</evidence>
<evidence type="ECO:0000269" key="6">
    <source>
    </source>
</evidence>
<evidence type="ECO:0000269" key="7">
    <source>
    </source>
</evidence>
<evidence type="ECO:0000269" key="8">
    <source>
    </source>
</evidence>
<evidence type="ECO:0000269" key="9">
    <source>
    </source>
</evidence>
<evidence type="ECO:0000269" key="10">
    <source>
    </source>
</evidence>
<evidence type="ECO:0000269" key="11">
    <source>
    </source>
</evidence>
<evidence type="ECO:0000269" key="12">
    <source>
    </source>
</evidence>
<evidence type="ECO:0000269" key="13">
    <source>
    </source>
</evidence>
<evidence type="ECO:0000303" key="14">
    <source>
    </source>
</evidence>
<evidence type="ECO:0000303" key="15">
    <source>
    </source>
</evidence>
<evidence type="ECO:0000305" key="16"/>
<evidence type="ECO:0007744" key="17">
    <source>
    </source>
</evidence>
<reference key="1">
    <citation type="journal article" date="2003" name="Am. J. Physiol.">
        <title>Renal expression of novel Na+/H+ exchanger isoform NHE8.</title>
        <authorList>
            <person name="Goyal S."/>
            <person name="Vanden Heuvel G."/>
            <person name="Aronson P.S."/>
        </authorList>
    </citation>
    <scope>NUCLEOTIDE SEQUENCE [MRNA] (ISOFORM 1)</scope>
    <scope>TISSUE SPECIFICITY</scope>
    <source>
        <strain>SWR/J</strain>
        <tissue>Kidney</tissue>
    </source>
</reference>
<reference key="2">
    <citation type="journal article" date="2005" name="J. Biol. Chem.">
        <title>Four Na+/H+ exchanger isoforms are distributed to Golgi and post-Golgi Compartments and are involved in organelle pH regulation.</title>
        <authorList>
            <person name="Nakamura N."/>
            <person name="Tanaka S."/>
            <person name="Teko Y."/>
            <person name="Mitsui K."/>
            <person name="Kanazawa H."/>
        </authorList>
    </citation>
    <scope>NUCLEOTIDE SEQUENCE [MRNA] (ISOFORM 1)</scope>
    <source>
        <strain>FVB/N</strain>
        <tissue>Kidney</tissue>
    </source>
</reference>
<reference key="3">
    <citation type="journal article" date="2005" name="Science">
        <title>The transcriptional landscape of the mammalian genome.</title>
        <authorList>
            <person name="Carninci P."/>
            <person name="Kasukawa T."/>
            <person name="Katayama S."/>
            <person name="Gough J."/>
            <person name="Frith M.C."/>
            <person name="Maeda N."/>
            <person name="Oyama R."/>
            <person name="Ravasi T."/>
            <person name="Lenhard B."/>
            <person name="Wells C."/>
            <person name="Kodzius R."/>
            <person name="Shimokawa K."/>
            <person name="Bajic V.B."/>
            <person name="Brenner S.E."/>
            <person name="Batalov S."/>
            <person name="Forrest A.R."/>
            <person name="Zavolan M."/>
            <person name="Davis M.J."/>
            <person name="Wilming L.G."/>
            <person name="Aidinis V."/>
            <person name="Allen J.E."/>
            <person name="Ambesi-Impiombato A."/>
            <person name="Apweiler R."/>
            <person name="Aturaliya R.N."/>
            <person name="Bailey T.L."/>
            <person name="Bansal M."/>
            <person name="Baxter L."/>
            <person name="Beisel K.W."/>
            <person name="Bersano T."/>
            <person name="Bono H."/>
            <person name="Chalk A.M."/>
            <person name="Chiu K.P."/>
            <person name="Choudhary V."/>
            <person name="Christoffels A."/>
            <person name="Clutterbuck D.R."/>
            <person name="Crowe M.L."/>
            <person name="Dalla E."/>
            <person name="Dalrymple B.P."/>
            <person name="de Bono B."/>
            <person name="Della Gatta G."/>
            <person name="di Bernardo D."/>
            <person name="Down T."/>
            <person name="Engstrom P."/>
            <person name="Fagiolini M."/>
            <person name="Faulkner G."/>
            <person name="Fletcher C.F."/>
            <person name="Fukushima T."/>
            <person name="Furuno M."/>
            <person name="Futaki S."/>
            <person name="Gariboldi M."/>
            <person name="Georgii-Hemming P."/>
            <person name="Gingeras T.R."/>
            <person name="Gojobori T."/>
            <person name="Green R.E."/>
            <person name="Gustincich S."/>
            <person name="Harbers M."/>
            <person name="Hayashi Y."/>
            <person name="Hensch T.K."/>
            <person name="Hirokawa N."/>
            <person name="Hill D."/>
            <person name="Huminiecki L."/>
            <person name="Iacono M."/>
            <person name="Ikeo K."/>
            <person name="Iwama A."/>
            <person name="Ishikawa T."/>
            <person name="Jakt M."/>
            <person name="Kanapin A."/>
            <person name="Katoh M."/>
            <person name="Kawasawa Y."/>
            <person name="Kelso J."/>
            <person name="Kitamura H."/>
            <person name="Kitano H."/>
            <person name="Kollias G."/>
            <person name="Krishnan S.P."/>
            <person name="Kruger A."/>
            <person name="Kummerfeld S.K."/>
            <person name="Kurochkin I.V."/>
            <person name="Lareau L.F."/>
            <person name="Lazarevic D."/>
            <person name="Lipovich L."/>
            <person name="Liu J."/>
            <person name="Liuni S."/>
            <person name="McWilliam S."/>
            <person name="Madan Babu M."/>
            <person name="Madera M."/>
            <person name="Marchionni L."/>
            <person name="Matsuda H."/>
            <person name="Matsuzawa S."/>
            <person name="Miki H."/>
            <person name="Mignone F."/>
            <person name="Miyake S."/>
            <person name="Morris K."/>
            <person name="Mottagui-Tabar S."/>
            <person name="Mulder N."/>
            <person name="Nakano N."/>
            <person name="Nakauchi H."/>
            <person name="Ng P."/>
            <person name="Nilsson R."/>
            <person name="Nishiguchi S."/>
            <person name="Nishikawa S."/>
            <person name="Nori F."/>
            <person name="Ohara O."/>
            <person name="Okazaki Y."/>
            <person name="Orlando V."/>
            <person name="Pang K.C."/>
            <person name="Pavan W.J."/>
            <person name="Pavesi G."/>
            <person name="Pesole G."/>
            <person name="Petrovsky N."/>
            <person name="Piazza S."/>
            <person name="Reed J."/>
            <person name="Reid J.F."/>
            <person name="Ring B.Z."/>
            <person name="Ringwald M."/>
            <person name="Rost B."/>
            <person name="Ruan Y."/>
            <person name="Salzberg S.L."/>
            <person name="Sandelin A."/>
            <person name="Schneider C."/>
            <person name="Schoenbach C."/>
            <person name="Sekiguchi K."/>
            <person name="Semple C.A."/>
            <person name="Seno S."/>
            <person name="Sessa L."/>
            <person name="Sheng Y."/>
            <person name="Shibata Y."/>
            <person name="Shimada H."/>
            <person name="Shimada K."/>
            <person name="Silva D."/>
            <person name="Sinclair B."/>
            <person name="Sperling S."/>
            <person name="Stupka E."/>
            <person name="Sugiura K."/>
            <person name="Sultana R."/>
            <person name="Takenaka Y."/>
            <person name="Taki K."/>
            <person name="Tammoja K."/>
            <person name="Tan S.L."/>
            <person name="Tang S."/>
            <person name="Taylor M.S."/>
            <person name="Tegner J."/>
            <person name="Teichmann S.A."/>
            <person name="Ueda H.R."/>
            <person name="van Nimwegen E."/>
            <person name="Verardo R."/>
            <person name="Wei C.L."/>
            <person name="Yagi K."/>
            <person name="Yamanishi H."/>
            <person name="Zabarovsky E."/>
            <person name="Zhu S."/>
            <person name="Zimmer A."/>
            <person name="Hide W."/>
            <person name="Bult C."/>
            <person name="Grimmond S.M."/>
            <person name="Teasdale R.D."/>
            <person name="Liu E.T."/>
            <person name="Brusic V."/>
            <person name="Quackenbush J."/>
            <person name="Wahlestedt C."/>
            <person name="Mattick J.S."/>
            <person name="Hume D.A."/>
            <person name="Kai C."/>
            <person name="Sasaki D."/>
            <person name="Tomaru Y."/>
            <person name="Fukuda S."/>
            <person name="Kanamori-Katayama M."/>
            <person name="Suzuki M."/>
            <person name="Aoki J."/>
            <person name="Arakawa T."/>
            <person name="Iida J."/>
            <person name="Imamura K."/>
            <person name="Itoh M."/>
            <person name="Kato T."/>
            <person name="Kawaji H."/>
            <person name="Kawagashira N."/>
            <person name="Kawashima T."/>
            <person name="Kojima M."/>
            <person name="Kondo S."/>
            <person name="Konno H."/>
            <person name="Nakano K."/>
            <person name="Ninomiya N."/>
            <person name="Nishio T."/>
            <person name="Okada M."/>
            <person name="Plessy C."/>
            <person name="Shibata K."/>
            <person name="Shiraki T."/>
            <person name="Suzuki S."/>
            <person name="Tagami M."/>
            <person name="Waki K."/>
            <person name="Watahiki A."/>
            <person name="Okamura-Oho Y."/>
            <person name="Suzuki H."/>
            <person name="Kawai J."/>
            <person name="Hayashizaki Y."/>
        </authorList>
    </citation>
    <scope>NUCLEOTIDE SEQUENCE [LARGE SCALE MRNA] (ISOFORMS 1 AND 2)</scope>
    <source>
        <strain>C57BL/6J</strain>
        <tissue>Embryonic spinal ganglion</tissue>
        <tissue>Oviduct</tissue>
    </source>
</reference>
<reference key="4">
    <citation type="journal article" date="2004" name="Nat. Genet.">
        <title>Complete sequencing and characterization of 21,243 full-length human cDNAs.</title>
        <authorList>
            <person name="Ota T."/>
            <person name="Suzuki Y."/>
            <person name="Nishikawa T."/>
            <person name="Otsuki T."/>
            <person name="Sugiyama T."/>
            <person name="Irie R."/>
            <person name="Wakamatsu A."/>
            <person name="Hayashi K."/>
            <person name="Sato H."/>
            <person name="Nagai K."/>
            <person name="Kimura K."/>
            <person name="Makita H."/>
            <person name="Sekine M."/>
            <person name="Obayashi M."/>
            <person name="Nishi T."/>
            <person name="Shibahara T."/>
            <person name="Tanaka T."/>
            <person name="Ishii S."/>
            <person name="Yamamoto J."/>
            <person name="Saito K."/>
            <person name="Kawai Y."/>
            <person name="Isono Y."/>
            <person name="Nakamura Y."/>
            <person name="Nagahari K."/>
            <person name="Murakami K."/>
            <person name="Yasuda T."/>
            <person name="Iwayanagi T."/>
            <person name="Wagatsuma M."/>
            <person name="Shiratori A."/>
            <person name="Sudo H."/>
            <person name="Hosoiri T."/>
            <person name="Kaku Y."/>
            <person name="Kodaira H."/>
            <person name="Kondo H."/>
            <person name="Sugawara M."/>
            <person name="Takahashi M."/>
            <person name="Kanda K."/>
            <person name="Yokoi T."/>
            <person name="Furuya T."/>
            <person name="Kikkawa E."/>
            <person name="Omura Y."/>
            <person name="Abe K."/>
            <person name="Kamihara K."/>
            <person name="Katsuta N."/>
            <person name="Sato K."/>
            <person name="Tanikawa M."/>
            <person name="Yamazaki M."/>
            <person name="Ninomiya K."/>
            <person name="Ishibashi T."/>
            <person name="Yamashita H."/>
            <person name="Murakawa K."/>
            <person name="Fujimori K."/>
            <person name="Tanai H."/>
            <person name="Kimata M."/>
            <person name="Watanabe M."/>
            <person name="Hiraoka S."/>
            <person name="Chiba Y."/>
            <person name="Ishida S."/>
            <person name="Ono Y."/>
            <person name="Takiguchi S."/>
            <person name="Watanabe S."/>
            <person name="Yosida M."/>
            <person name="Hotuta T."/>
            <person name="Kusano J."/>
            <person name="Kanehori K."/>
            <person name="Takahashi-Fujii A."/>
            <person name="Hara H."/>
            <person name="Tanase T.-O."/>
            <person name="Nomura Y."/>
            <person name="Togiya S."/>
            <person name="Komai F."/>
            <person name="Hara R."/>
            <person name="Takeuchi K."/>
            <person name="Arita M."/>
            <person name="Imose N."/>
            <person name="Musashino K."/>
            <person name="Yuuki H."/>
            <person name="Oshima A."/>
            <person name="Sasaki N."/>
            <person name="Aotsuka S."/>
            <person name="Yoshikawa Y."/>
            <person name="Matsunawa H."/>
            <person name="Ichihara T."/>
            <person name="Shiohata N."/>
            <person name="Sano S."/>
            <person name="Moriya S."/>
            <person name="Momiyama H."/>
            <person name="Satoh N."/>
            <person name="Takami S."/>
            <person name="Terashima Y."/>
            <person name="Suzuki O."/>
            <person name="Nakagawa S."/>
            <person name="Senoh A."/>
            <person name="Mizoguchi H."/>
            <person name="Goto Y."/>
            <person name="Shimizu F."/>
            <person name="Wakebe H."/>
            <person name="Hishigaki H."/>
            <person name="Watanabe T."/>
            <person name="Sugiyama A."/>
            <person name="Takemoto M."/>
            <person name="Kawakami B."/>
            <person name="Yamazaki M."/>
            <person name="Watanabe K."/>
            <person name="Kumagai A."/>
            <person name="Itakura S."/>
            <person name="Fukuzumi Y."/>
            <person name="Fujimori Y."/>
            <person name="Komiyama M."/>
            <person name="Tashiro H."/>
            <person name="Tanigami A."/>
            <person name="Fujiwara T."/>
            <person name="Ono T."/>
            <person name="Yamada K."/>
            <person name="Fujii Y."/>
            <person name="Ozaki K."/>
            <person name="Hirao M."/>
            <person name="Ohmori Y."/>
            <person name="Kawabata A."/>
            <person name="Hikiji T."/>
            <person name="Kobatake N."/>
            <person name="Inagaki H."/>
            <person name="Ikema Y."/>
            <person name="Okamoto S."/>
            <person name="Okitani R."/>
            <person name="Kawakami T."/>
            <person name="Noguchi S."/>
            <person name="Itoh T."/>
            <person name="Shigeta K."/>
            <person name="Senba T."/>
            <person name="Matsumura K."/>
            <person name="Nakajima Y."/>
            <person name="Mizuno T."/>
            <person name="Morinaga M."/>
            <person name="Sasaki M."/>
            <person name="Togashi T."/>
            <person name="Oyama M."/>
            <person name="Hata H."/>
            <person name="Watanabe M."/>
            <person name="Komatsu T."/>
            <person name="Mizushima-Sugano J."/>
            <person name="Satoh T."/>
            <person name="Shirai Y."/>
            <person name="Takahashi Y."/>
            <person name="Nakagawa K."/>
            <person name="Okumura K."/>
            <person name="Nagase T."/>
            <person name="Nomura N."/>
            <person name="Kikuchi H."/>
            <person name="Masuho Y."/>
            <person name="Yamashita R."/>
            <person name="Nakai K."/>
            <person name="Yada T."/>
            <person name="Nakamura Y."/>
            <person name="Ohara O."/>
            <person name="Isogai T."/>
            <person name="Sugano S."/>
        </authorList>
    </citation>
    <scope>NUCLEOTIDE SEQUENCE [LARGE SCALE MRNA] (ISOFORM 3)</scope>
</reference>
<reference key="5">
    <citation type="journal article" date="2009" name="PLoS Biol.">
        <title>Lineage-specific biology revealed by a finished genome assembly of the mouse.</title>
        <authorList>
            <person name="Church D.M."/>
            <person name="Goodstadt L."/>
            <person name="Hillier L.W."/>
            <person name="Zody M.C."/>
            <person name="Goldstein S."/>
            <person name="She X."/>
            <person name="Bult C.J."/>
            <person name="Agarwala R."/>
            <person name="Cherry J.L."/>
            <person name="DiCuccio M."/>
            <person name="Hlavina W."/>
            <person name="Kapustin Y."/>
            <person name="Meric P."/>
            <person name="Maglott D."/>
            <person name="Birtle Z."/>
            <person name="Marques A.C."/>
            <person name="Graves T."/>
            <person name="Zhou S."/>
            <person name="Teague B."/>
            <person name="Potamousis K."/>
            <person name="Churas C."/>
            <person name="Place M."/>
            <person name="Herschleb J."/>
            <person name="Runnheim R."/>
            <person name="Forrest D."/>
            <person name="Amos-Landgraf J."/>
            <person name="Schwartz D.C."/>
            <person name="Cheng Z."/>
            <person name="Lindblad-Toh K."/>
            <person name="Eichler E.E."/>
            <person name="Ponting C.P."/>
        </authorList>
    </citation>
    <scope>NUCLEOTIDE SEQUENCE [LARGE SCALE GENOMIC DNA]</scope>
    <source>
        <strain>C57BL/6J</strain>
    </source>
</reference>
<reference key="6">
    <citation type="submission" date="2005-07" db="EMBL/GenBank/DDBJ databases">
        <authorList>
            <person name="Mural R.J."/>
            <person name="Adams M.D."/>
            <person name="Myers E.W."/>
            <person name="Smith H.O."/>
            <person name="Venter J.C."/>
        </authorList>
    </citation>
    <scope>NUCLEOTIDE SEQUENCE [LARGE SCALE GENOMIC DNA]</scope>
</reference>
<reference key="7">
    <citation type="journal article" date="2004" name="Genome Res.">
        <title>The status, quality, and expansion of the NIH full-length cDNA project: the Mammalian Gene Collection (MGC).</title>
        <authorList>
            <consortium name="The MGC Project Team"/>
        </authorList>
    </citation>
    <scope>NUCLEOTIDE SEQUENCE [LARGE SCALE MRNA] (ISOFORM 1)</scope>
    <source>
        <strain>C57BL/6J</strain>
        <strain>FVB/N</strain>
        <tissue>Brain</tissue>
        <tissue>Kidney</tissue>
    </source>
</reference>
<reference key="8">
    <citation type="journal article" date="2010" name="Cell">
        <title>A tissue-specific atlas of mouse protein phosphorylation and expression.</title>
        <authorList>
            <person name="Huttlin E.L."/>
            <person name="Jedrychowski M.P."/>
            <person name="Elias J.E."/>
            <person name="Goswami T."/>
            <person name="Rad R."/>
            <person name="Beausoleil S.A."/>
            <person name="Villen J."/>
            <person name="Haas W."/>
            <person name="Sowa M.E."/>
            <person name="Gygi S.P."/>
        </authorList>
    </citation>
    <scope>PHOSPHORYLATION [LARGE SCALE ANALYSIS] AT THR-505</scope>
    <scope>IDENTIFICATION BY MASS SPECTROMETRY [LARGE SCALE ANALYSIS]</scope>
    <source>
        <tissue>Brain</tissue>
    </source>
</reference>
<reference key="9">
    <citation type="journal article" date="2008" name="Cell. Physiol. Biochem.">
        <title>Gastrointestinal distribution and kinetic characterization of the sodium-hydrogen exchanger isoform 8 (NHE8).</title>
        <authorList>
            <person name="Xu H."/>
            <person name="Chen H."/>
            <person name="Dong J."/>
            <person name="Lynch R."/>
            <person name="Ghishan F.K."/>
        </authorList>
    </citation>
    <scope>TISSUE SPECIFICITY</scope>
    <scope>DEVELOPMENTAL STAGE</scope>
</reference>
<reference key="10">
    <citation type="journal article" date="2012" name="Am. J. Physiol.">
        <title>Impaired mucin synthesis and bicarbonate secretion in the colon of NHE8 knockout mice.</title>
        <authorList>
            <person name="Xu H."/>
            <person name="Zhang B."/>
            <person name="Li J."/>
            <person name="Wang C."/>
            <person name="Chen H."/>
            <person name="Ghishan F.K."/>
        </authorList>
    </citation>
    <scope>DISRUPTION PHENOTYPE</scope>
    <scope>FUNCTION</scope>
</reference>
<reference key="11">
    <citation type="journal article" date="2013" name="Am. J. Physiol.">
        <title>NHE8 plays an important role in mucosal protection via its effect on bacterial adhesion.</title>
        <authorList>
            <person name="Liu C."/>
            <person name="Xu H."/>
            <person name="Zhang B."/>
            <person name="Johansson M.E."/>
            <person name="Li J."/>
            <person name="Hansson G.C."/>
            <person name="Ghishan F.K."/>
        </authorList>
    </citation>
    <scope>DISRUPTION PHENOTYPE</scope>
    <scope>FUNCTION</scope>
</reference>
<reference key="12">
    <citation type="journal article" date="2013" name="Am. J. Physiol.">
        <title>NHE8 plays important roles in gastric mucosal protection.</title>
        <authorList>
            <person name="Xu H."/>
            <person name="Li J."/>
            <person name="Chen H."/>
            <person name="Wang C."/>
            <person name="Ghishan F.K."/>
        </authorList>
    </citation>
    <scope>FUNCTION</scope>
    <scope>TISSUE SPECIFICITY</scope>
    <scope>SUBCELLULAR LOCATION</scope>
    <scope>DISRUPTION PHENOTYPE</scope>
</reference>
<reference key="13">
    <citation type="journal article" date="2015" name="Am. J. Physiol.">
        <title>Loss of NHE8 expression impairs ocular surface function in mice.</title>
        <authorList>
            <person name="Xu H."/>
            <person name="Zhao Y."/>
            <person name="Li J."/>
            <person name="Wang M."/>
            <person name="Lian F."/>
            <person name="Gao M."/>
            <person name="Ghishan F.K."/>
        </authorList>
    </citation>
    <scope>DISRUPTION PHENOTYPE</scope>
    <scope>FUNCTION</scope>
</reference>
<reference key="14">
    <citation type="journal article" date="2015" name="Am. J. Physiol.">
        <title>Disruption of NHE8 expression impairs Leydig cell function in the testes.</title>
        <authorList>
            <person name="Xu H."/>
            <person name="Chen H."/>
            <person name="Li J."/>
            <person name="Zhao Y."/>
            <person name="Ghishan F.K."/>
        </authorList>
    </citation>
    <scope>DISRUPTION PHENOTYPE</scope>
    <scope>FUNCTION</scope>
</reference>
<reference key="15">
    <citation type="journal article" date="2015" name="Am. J. Physiol.">
        <title>Loss of NHE8 expression impairs intestinal mucosal integrity.</title>
        <authorList>
            <person name="Wang A."/>
            <person name="Li J."/>
            <person name="Zhao Y."/>
            <person name="Johansson M.E."/>
            <person name="Xu H."/>
            <person name="Ghishan F.K."/>
        </authorList>
    </citation>
    <scope>DISRUPTION PHENOTYPE</scope>
    <scope>FUNCTION</scope>
</reference>
<reference key="16">
    <citation type="journal article" date="2017" name="J. Biol. Chem.">
        <title>Loss of the Na+/H+ exchanger NHE8 causes male infertility in mice by disrupting acrosome formation.</title>
        <authorList>
            <person name="Oberheide K."/>
            <person name="Puchkov D."/>
            <person name="Jentsch T.J."/>
        </authorList>
    </citation>
    <scope>DISRUPTION PHENOTYPE</scope>
    <scope>FUNCTION</scope>
    <scope>SUBCELLULAR LOCATION</scope>
</reference>
<reference key="17">
    <citation type="journal article" date="2018" name="Exp. Eye Res.">
        <title>Essential function of NHE8 in mouse retina demonstrated by AAV-mediated CRISPR/Cas9 knockdown.</title>
        <authorList>
            <person name="Xia C.H."/>
            <person name="Ferguson I."/>
            <person name="Li M."/>
            <person name="Kim A."/>
            <person name="Onishi A."/>
            <person name="Li L."/>
            <person name="Su B."/>
            <person name="Gong X."/>
        </authorList>
    </citation>
    <scope>DISRUPTION PHENOTYPE</scope>
    <scope>FUNCTION</scope>
</reference>
<sequence length="576" mass="64737">MAEEEFSNTTHETFNFTLHTTLGVTTKLVLPTPAKPILPVQTGEQAQQEEQSSGMTIFFSLLVLAICIILVHLLIRYRLHFLPESVAVVSLGILMGAVIKVIEFKKLANWKEEEMFRPNMFFLLLLPPIIFESGYSLHKGNFFQNIGSITLFAVFGTAISAFVVGGGIYFLGQADVISKLNMTDSFAFGSLISAVDPVATIAIFNALHVDPVLNMLVFGESILNDAVSIVLTNTAEGLTRKHMSDVSGWQTFSQALGYFLKMFFGSAALGTLTGLISALVLKHIDLRKTPSLEFGMMIIFAYLPYGLAEGISLSGIMAILFSGIVMSHYTHHNLSPVTQILMQQTLRTVAFLCETCVFAFLGLSIFSFPHKFEISFVIWCIVLVLFGRAVNIFPLSYLLNFFRDHKITPKMMFIMWFSGLRGAIPYALSLHLGLEPMEKRQLIGTTTIVIVLFTILLLGGSTMPLIRLVDIEDARARRRSKKDVNLSKTEKMGNAIESEHLSELTEEEYEAHYIRQQDLKGFMWLDAKYLNPFFTRRLTQEDLHHGRIQMKSLTNKWYEEVRQGPSGSEDDEQELF</sequence>
<dbReference type="EMBL" id="AF482993">
    <property type="protein sequence ID" value="AAL89753.1"/>
    <property type="molecule type" value="mRNA"/>
</dbReference>
<dbReference type="EMBL" id="AB089793">
    <property type="protein sequence ID" value="BAD69591.1"/>
    <property type="molecule type" value="mRNA"/>
</dbReference>
<dbReference type="EMBL" id="AK051791">
    <property type="protein sequence ID" value="BAC34770.1"/>
    <property type="molecule type" value="mRNA"/>
</dbReference>
<dbReference type="EMBL" id="AK129013">
    <property type="protein sequence ID" value="BAC87669.1"/>
    <property type="molecule type" value="mRNA"/>
</dbReference>
<dbReference type="EMBL" id="AK143281">
    <property type="protein sequence ID" value="BAE25331.1"/>
    <property type="molecule type" value="mRNA"/>
</dbReference>
<dbReference type="EMBL" id="AL589870">
    <property type="status" value="NOT_ANNOTATED_CDS"/>
    <property type="molecule type" value="Genomic_DNA"/>
</dbReference>
<dbReference type="EMBL" id="AL591762">
    <property type="status" value="NOT_ANNOTATED_CDS"/>
    <property type="molecule type" value="Genomic_DNA"/>
</dbReference>
<dbReference type="EMBL" id="CH466551">
    <property type="protein sequence ID" value="EDL06513.1"/>
    <property type="molecule type" value="Genomic_DNA"/>
</dbReference>
<dbReference type="EMBL" id="BC030879">
    <property type="protein sequence ID" value="AAH30879.1"/>
    <property type="molecule type" value="mRNA"/>
</dbReference>
<dbReference type="EMBL" id="BC058947">
    <property type="protein sequence ID" value="AAH58947.1"/>
    <property type="molecule type" value="mRNA"/>
</dbReference>
<dbReference type="CCDS" id="CCDS38339.1">
    <molecule id="Q8R4D1-1"/>
</dbReference>
<dbReference type="RefSeq" id="NP_001291469.1">
    <property type="nucleotide sequence ID" value="NM_001304540.1"/>
</dbReference>
<dbReference type="RefSeq" id="NP_001291471.1">
    <property type="nucleotide sequence ID" value="NM_001304542.1"/>
</dbReference>
<dbReference type="RefSeq" id="NP_683731.1">
    <molecule id="Q8R4D1-1"/>
    <property type="nucleotide sequence ID" value="NM_148929.3"/>
</dbReference>
<dbReference type="SMR" id="Q8R4D1"/>
<dbReference type="BioGRID" id="218469">
    <property type="interactions" value="1"/>
</dbReference>
<dbReference type="FunCoup" id="Q8R4D1">
    <property type="interactions" value="886"/>
</dbReference>
<dbReference type="STRING" id="10090.ENSMUSP00000044185"/>
<dbReference type="GlyGen" id="Q8R4D1">
    <property type="glycosylation" value="3 sites, 1 N-linked glycan (2 sites)"/>
</dbReference>
<dbReference type="iPTMnet" id="Q8R4D1"/>
<dbReference type="PhosphoSitePlus" id="Q8R4D1"/>
<dbReference type="PaxDb" id="10090-ENSMUSP00000044185"/>
<dbReference type="ProteomicsDB" id="257038">
    <molecule id="Q8R4D1-1"/>
</dbReference>
<dbReference type="ProteomicsDB" id="257039">
    <molecule id="Q8R4D1-2"/>
</dbReference>
<dbReference type="ProteomicsDB" id="257040">
    <molecule id="Q8R4D1-4"/>
</dbReference>
<dbReference type="Pumba" id="Q8R4D1"/>
<dbReference type="Antibodypedia" id="28505">
    <property type="antibodies" value="164 antibodies from 24 providers"/>
</dbReference>
<dbReference type="DNASU" id="77031"/>
<dbReference type="Ensembl" id="ENSMUST00000047815.13">
    <molecule id="Q8R4D1-1"/>
    <property type="protein sequence ID" value="ENSMUSP00000044185.7"/>
    <property type="gene ID" value="ENSMUSG00000039463.16"/>
</dbReference>
<dbReference type="GeneID" id="77031"/>
<dbReference type="KEGG" id="mmu:77031"/>
<dbReference type="UCSC" id="uc008nzp.2">
    <molecule id="Q8R4D1-1"/>
    <property type="organism name" value="mouse"/>
</dbReference>
<dbReference type="UCSC" id="uc008nzr.2">
    <molecule id="Q8R4D1-4"/>
    <property type="organism name" value="mouse"/>
</dbReference>
<dbReference type="AGR" id="MGI:1924281"/>
<dbReference type="CTD" id="23315"/>
<dbReference type="MGI" id="MGI:1924281">
    <property type="gene designation" value="Slc9a8"/>
</dbReference>
<dbReference type="VEuPathDB" id="HostDB:ENSMUSG00000039463"/>
<dbReference type="eggNOG" id="KOG1965">
    <property type="taxonomic scope" value="Eukaryota"/>
</dbReference>
<dbReference type="GeneTree" id="ENSGT00940000157210"/>
<dbReference type="InParanoid" id="Q8R4D1"/>
<dbReference type="OMA" id="ETVVMWW"/>
<dbReference type="OrthoDB" id="196264at2759"/>
<dbReference type="PhylomeDB" id="Q8R4D1"/>
<dbReference type="TreeFam" id="TF354313"/>
<dbReference type="Reactome" id="R-MMU-425986">
    <property type="pathway name" value="Sodium/Proton exchangers"/>
</dbReference>
<dbReference type="BioGRID-ORCS" id="77031">
    <property type="hits" value="1 hit in 63 CRISPR screens"/>
</dbReference>
<dbReference type="ChiTaRS" id="Slc9a8">
    <property type="organism name" value="mouse"/>
</dbReference>
<dbReference type="PRO" id="PR:Q8R4D1"/>
<dbReference type="Proteomes" id="UP000000589">
    <property type="component" value="Chromosome 2"/>
</dbReference>
<dbReference type="RNAct" id="Q8R4D1">
    <property type="molecule type" value="protein"/>
</dbReference>
<dbReference type="Bgee" id="ENSMUSG00000039463">
    <property type="expression patterns" value="Expressed in right kidney and 226 other cell types or tissues"/>
</dbReference>
<dbReference type="ExpressionAtlas" id="Q8R4D1">
    <property type="expression patterns" value="baseline and differential"/>
</dbReference>
<dbReference type="GO" id="GO:0001669">
    <property type="term" value="C:acrosomal vesicle"/>
    <property type="evidence" value="ECO:0000314"/>
    <property type="project" value="UniProtKB"/>
</dbReference>
<dbReference type="GO" id="GO:0016324">
    <property type="term" value="C:apical plasma membrane"/>
    <property type="evidence" value="ECO:0000314"/>
    <property type="project" value="UniProtKB"/>
</dbReference>
<dbReference type="GO" id="GO:0005794">
    <property type="term" value="C:Golgi apparatus"/>
    <property type="evidence" value="ECO:0000314"/>
    <property type="project" value="MGI"/>
</dbReference>
<dbReference type="GO" id="GO:0000139">
    <property type="term" value="C:Golgi membrane"/>
    <property type="evidence" value="ECO:0000250"/>
    <property type="project" value="UniProtKB"/>
</dbReference>
<dbReference type="GO" id="GO:0032585">
    <property type="term" value="C:multivesicular body membrane"/>
    <property type="evidence" value="ECO:0007669"/>
    <property type="project" value="UniProtKB-SubCell"/>
</dbReference>
<dbReference type="GO" id="GO:0032588">
    <property type="term" value="C:trans-Golgi network membrane"/>
    <property type="evidence" value="ECO:0007669"/>
    <property type="project" value="Ensembl"/>
</dbReference>
<dbReference type="GO" id="GO:0015386">
    <property type="term" value="F:potassium:proton antiporter activity"/>
    <property type="evidence" value="ECO:0000314"/>
    <property type="project" value="MGI"/>
</dbReference>
<dbReference type="GO" id="GO:0015385">
    <property type="term" value="F:sodium:proton antiporter activity"/>
    <property type="evidence" value="ECO:0000314"/>
    <property type="project" value="MGI"/>
</dbReference>
<dbReference type="GO" id="GO:0001675">
    <property type="term" value="P:acrosome assembly"/>
    <property type="evidence" value="ECO:0000315"/>
    <property type="project" value="UniProtKB"/>
</dbReference>
<dbReference type="GO" id="GO:0006813">
    <property type="term" value="P:potassium ion transport"/>
    <property type="evidence" value="ECO:0000314"/>
    <property type="project" value="MGI"/>
</dbReference>
<dbReference type="GO" id="GO:1902600">
    <property type="term" value="P:proton transmembrane transport"/>
    <property type="evidence" value="ECO:0000250"/>
    <property type="project" value="UniProtKB"/>
</dbReference>
<dbReference type="GO" id="GO:1905526">
    <property type="term" value="P:regulation of Golgi lumen acidification"/>
    <property type="evidence" value="ECO:0007669"/>
    <property type="project" value="Ensembl"/>
</dbReference>
<dbReference type="GO" id="GO:0051453">
    <property type="term" value="P:regulation of intracellular pH"/>
    <property type="evidence" value="ECO:0000314"/>
    <property type="project" value="MGI"/>
</dbReference>
<dbReference type="GO" id="GO:0035725">
    <property type="term" value="P:sodium ion transmembrane transport"/>
    <property type="evidence" value="ECO:0000250"/>
    <property type="project" value="UniProtKB"/>
</dbReference>
<dbReference type="GO" id="GO:0006814">
    <property type="term" value="P:sodium ion transport"/>
    <property type="evidence" value="ECO:0000314"/>
    <property type="project" value="MGI"/>
</dbReference>
<dbReference type="Gene3D" id="6.10.140.1330">
    <property type="match status" value="1"/>
</dbReference>
<dbReference type="InterPro" id="IPR018422">
    <property type="entry name" value="Cation/H_exchanger_CPA1"/>
</dbReference>
<dbReference type="InterPro" id="IPR006153">
    <property type="entry name" value="Cation/H_exchanger_TM"/>
</dbReference>
<dbReference type="InterPro" id="IPR004709">
    <property type="entry name" value="NaH_exchanger"/>
</dbReference>
<dbReference type="NCBIfam" id="TIGR00840">
    <property type="entry name" value="b_cpa1"/>
    <property type="match status" value="1"/>
</dbReference>
<dbReference type="PANTHER" id="PTHR10110">
    <property type="entry name" value="SODIUM/HYDROGEN EXCHANGER"/>
    <property type="match status" value="1"/>
</dbReference>
<dbReference type="PANTHER" id="PTHR10110:SF191">
    <property type="entry name" value="SODIUM_HYDROGEN EXCHANGER 8"/>
    <property type="match status" value="1"/>
</dbReference>
<dbReference type="Pfam" id="PF00999">
    <property type="entry name" value="Na_H_Exchanger"/>
    <property type="match status" value="1"/>
</dbReference>
<dbReference type="PRINTS" id="PR01084">
    <property type="entry name" value="NAHEXCHNGR"/>
</dbReference>
<accession>Q8R4D1</accession>
<accession>A2A465</accession>
<accession>Q3UPR4</accession>
<accession>Q5WA59</accession>
<accession>Q8BIH8</accession>
<accession>Q8BJ27</accession>
<keyword id="KW-0025">Alternative splicing</keyword>
<keyword id="KW-0050">Antiport</keyword>
<keyword id="KW-1003">Cell membrane</keyword>
<keyword id="KW-0968">Cytoplasmic vesicle</keyword>
<keyword id="KW-0221">Differentiation</keyword>
<keyword id="KW-0967">Endosome</keyword>
<keyword id="KW-0333">Golgi apparatus</keyword>
<keyword id="KW-0406">Ion transport</keyword>
<keyword id="KW-0472">Membrane</keyword>
<keyword id="KW-0597">Phosphoprotein</keyword>
<keyword id="KW-1185">Reference proteome</keyword>
<keyword id="KW-0915">Sodium</keyword>
<keyword id="KW-0739">Sodium transport</keyword>
<keyword id="KW-0744">Spermatogenesis</keyword>
<keyword id="KW-0812">Transmembrane</keyword>
<keyword id="KW-1133">Transmembrane helix</keyword>
<keyword id="KW-0813">Transport</keyword>
<organism>
    <name type="scientific">Mus musculus</name>
    <name type="common">Mouse</name>
    <dbReference type="NCBI Taxonomy" id="10090"/>
    <lineage>
        <taxon>Eukaryota</taxon>
        <taxon>Metazoa</taxon>
        <taxon>Chordata</taxon>
        <taxon>Craniata</taxon>
        <taxon>Vertebrata</taxon>
        <taxon>Euteleostomi</taxon>
        <taxon>Mammalia</taxon>
        <taxon>Eutheria</taxon>
        <taxon>Euarchontoglires</taxon>
        <taxon>Glires</taxon>
        <taxon>Rodentia</taxon>
        <taxon>Myomorpha</taxon>
        <taxon>Muroidea</taxon>
        <taxon>Muridae</taxon>
        <taxon>Murinae</taxon>
        <taxon>Mus</taxon>
        <taxon>Mus</taxon>
    </lineage>
</organism>
<comment type="function">
    <text evidence="2 7 8 9 10 11 12 13">Na(+)/H(+) antiporter. Mediates the electoneutral exchange of intracellular H(+) ions for extracellular Na(+) in 1:1 stoichiometry. Acts as an Na(+)/H(+) exchanger in the trans-Golgi. Contributes to the regulation of pH regulation of Golgi apparatus, and consequently, in protein trafficking and endosomal morphology (By similarity). Plays a crucial role in germ cells in acrosome biogenesis and sperm development, probably by playing a role in the fusion of the Golgi-derived vesicles that form the acrosomal cap (PubMed:25472965, PubMed:28476888). Can also be active at the cell surface of specialized cells. In the small intestine, plays a major physiological role in transepithelial absorption of Na(+). Regulates intracellular pH homeostasis of intestinal epithelial cells (By similarity). Acts as an important regulator of mucosal integrity in the intestine and in the stomach, could mediate the pH fluctuation necessary for mucin exocytosis or assist membrane trafficking of other proteins (PubMed:23220221, PubMed:23657568, PubMed:26505975). Plays a role in photoreceptor survival and in the maintenance of intracellular pH homeostasis in retinal pigment epithelium (RPE cells) (PubMed:25377091, PubMed:29958869).</text>
</comment>
<comment type="catalytic activity">
    <reaction evidence="2">
        <text>Na(+)(in) + H(+)(out) = Na(+)(out) + H(+)(in)</text>
        <dbReference type="Rhea" id="RHEA:29419"/>
        <dbReference type="ChEBI" id="CHEBI:15378"/>
        <dbReference type="ChEBI" id="CHEBI:29101"/>
    </reaction>
</comment>
<comment type="subcellular location">
    <subcellularLocation>
        <location evidence="2">Golgi apparatus membrane</location>
        <topology evidence="3">Multi-pass membrane protein</topology>
    </subcellularLocation>
    <subcellularLocation>
        <location evidence="2">Golgi apparatus</location>
        <location evidence="2">trans-Golgi network membrane</location>
        <topology evidence="3">Multi-pass membrane protein</topology>
    </subcellularLocation>
    <subcellularLocation>
        <location evidence="2">Endosome</location>
        <location evidence="2">Multivesicular body membrane</location>
        <topology evidence="3">Multi-pass membrane protein</topology>
    </subcellularLocation>
    <subcellularLocation>
        <location evidence="7">Apical cell membrane</location>
        <topology evidence="3">Multi-pass membrane protein</topology>
    </subcellularLocation>
    <subcellularLocation>
        <location evidence="12">Cytoplasmic vesicle</location>
        <location evidence="12">Secretory vesicle</location>
        <location evidence="12">Acrosome</location>
    </subcellularLocation>
    <text evidence="1 2">Mainly localized to the mid- to trans-Golgi compartments but a proportion is also localized to multivesicular bodies (By similarity). Localized at the apical membrane in the gastrointestinal tract (By similarity). Recruitment to the plasma membrane upon acid stimulation (By similarity).</text>
</comment>
<comment type="alternative products">
    <event type="alternative splicing"/>
    <isoform>
        <id>Q8R4D1-1</id>
        <name>1</name>
        <sequence type="displayed"/>
    </isoform>
    <isoform>
        <id>Q8R4D1-2</id>
        <name>2</name>
        <sequence type="described" ref="VSP_009500"/>
    </isoform>
    <isoform>
        <id>Q8R4D1-4</id>
        <name>3</name>
        <sequence type="described" ref="VSP_009503 VSP_009504"/>
    </isoform>
</comment>
<comment type="tissue specificity">
    <text evidence="4 5 7">Predominantly expressed in the liver, skeletal muscle, kidney, and testis (PubMed:12409279). Expressed in both renal cortex and medulla (PubMed:12409279). Detected throughout the entire gastrointestinal tract, with high expression detected in stomach, duodenum and ascending colon (PubMed:18209477). In gastric epithelium; expressed in the glands within the fundus and pylorus regions (PubMed:23220221).</text>
</comment>
<comment type="developmental stage">
    <text evidence="5">Expression is much higher in the stomach and jejunum in young mice compared with adult mice.</text>
</comment>
<comment type="disruption phenotype">
    <text evidence="6 7 8 9 10 11 12 13">The deficient mice have no obvious intestinal phenotype, show no defect in Na(+)-absorption, have normal serum Na(+) levels and no signs of diarrhea. Apically expressed Slc9a2 and Slc9a3 are increased in the small intestine of the Slc9a8-deficient mice in compensation (PubMed:22575219). Deficient mice have a reduced gastric mucosal surface pH, a higher incidence of developing gastric ulcer, and a decreased of mucin-2 (Muc2) expression (PubMed:23220221, PubMed:23657568). The intestinal mucosa in Slc9a8-deficient mice is prone to bacterial adhesion and penetration, which in turn promotes inflammation (PubMed:23220221, PubMed:26505975). Male knockout mice are infertile, have small testis, low testosterone levels, normal LH and FSH serum levels, however LH receptor (Lhcgr) is approximately 50% reduced. The spermatogenesise is also affected, deficient mice have round-headed spermatozoa and lack acrosomes (PubMed:25472965, PubMed:28476888). Knockout mice exhibit reduced tear production and increased corneal staining (PubMed:25377091). Knockdown Slc9a8 in adult retina leads to photoreceptor cell death (PubMed:25377091, PubMed:29958869).</text>
</comment>
<comment type="similarity">
    <text evidence="16">Belongs to the monovalent cation:proton antiporter 1 (CPA1) transporter (TC 2.A.36) family.</text>
</comment>
<name>SL9A8_MOUSE</name>